<feature type="chain" id="PRO_0000314938" description="Arginine/serine-rich coiled-coil protein 2">
    <location>
        <begin position="1"/>
        <end position="376"/>
    </location>
</feature>
<feature type="region of interest" description="Disordered" evidence="3">
    <location>
        <begin position="1"/>
        <end position="171"/>
    </location>
</feature>
<feature type="coiled-coil region" evidence="2">
    <location>
        <begin position="171"/>
        <end position="214"/>
    </location>
</feature>
<feature type="compositionally biased region" description="Basic and acidic residues" evidence="3">
    <location>
        <begin position="13"/>
        <end position="52"/>
    </location>
</feature>
<feature type="compositionally biased region" description="Basic residues" evidence="3">
    <location>
        <begin position="53"/>
        <end position="155"/>
    </location>
</feature>
<feature type="modified residue" description="Phosphoserine" evidence="1">
    <location>
        <position position="45"/>
    </location>
</feature>
<feature type="modified residue" description="Phosphoserine" evidence="1">
    <location>
        <position position="318"/>
    </location>
</feature>
<feature type="cross-link" description="Glycyl lysine isopeptide (Lys-Gly) (interchain with G-Cter in SUMO1); alternate" evidence="1">
    <location>
        <position position="317"/>
    </location>
</feature>
<feature type="cross-link" description="Glycyl lysine isopeptide (Lys-Gly) (interchain with G-Cter in SUMO2); alternate" evidence="1">
    <location>
        <position position="317"/>
    </location>
</feature>
<protein>
    <recommendedName>
        <fullName>Arginine/serine-rich coiled-coil protein 2</fullName>
    </recommendedName>
</protein>
<comment type="similarity">
    <text evidence="4">Belongs to the RSRC2 family.</text>
</comment>
<keyword id="KW-0175">Coiled coil</keyword>
<keyword id="KW-1017">Isopeptide bond</keyword>
<keyword id="KW-0597">Phosphoprotein</keyword>
<keyword id="KW-1185">Reference proteome</keyword>
<keyword id="KW-0832">Ubl conjugation</keyword>
<evidence type="ECO:0000250" key="1">
    <source>
        <dbReference type="UniProtKB" id="Q7L4I2"/>
    </source>
</evidence>
<evidence type="ECO:0000255" key="2"/>
<evidence type="ECO:0000256" key="3">
    <source>
        <dbReference type="SAM" id="MobiDB-lite"/>
    </source>
</evidence>
<evidence type="ECO:0000305" key="4"/>
<dbReference type="EMBL" id="BC132550">
    <property type="protein sequence ID" value="AAI32551.1"/>
    <property type="molecule type" value="mRNA"/>
</dbReference>
<dbReference type="EMBL" id="BC132552">
    <property type="protein sequence ID" value="AAI32553.1"/>
    <property type="molecule type" value="mRNA"/>
</dbReference>
<dbReference type="CCDS" id="CCDS39272.1"/>
<dbReference type="RefSeq" id="NP_001005525.1">
    <property type="nucleotide sequence ID" value="NM_001005525.2"/>
</dbReference>
<dbReference type="RefSeq" id="NP_001346789.1">
    <property type="nucleotide sequence ID" value="NM_001359860.1"/>
</dbReference>
<dbReference type="RefSeq" id="NP_001346790.1">
    <property type="nucleotide sequence ID" value="NM_001359861.1"/>
</dbReference>
<dbReference type="RefSeq" id="NP_079714.1">
    <property type="nucleotide sequence ID" value="NM_025438.2"/>
</dbReference>
<dbReference type="RefSeq" id="XP_006530309.1">
    <property type="nucleotide sequence ID" value="XM_006530246.3"/>
</dbReference>
<dbReference type="RefSeq" id="XP_006530310.1">
    <property type="nucleotide sequence ID" value="XM_006530247.3"/>
</dbReference>
<dbReference type="SMR" id="A2RTL5"/>
<dbReference type="BioGRID" id="228991">
    <property type="interactions" value="5"/>
</dbReference>
<dbReference type="FunCoup" id="A2RTL5">
    <property type="interactions" value="1015"/>
</dbReference>
<dbReference type="STRING" id="10090.ENSMUSP00000138691"/>
<dbReference type="PaxDb" id="10090-ENSMUSP00000138691"/>
<dbReference type="PeptideAtlas" id="A2RTL5"/>
<dbReference type="ProteomicsDB" id="256791"/>
<dbReference type="Pumba" id="A2RTL5"/>
<dbReference type="Antibodypedia" id="31659">
    <property type="antibodies" value="115 antibodies from 19 providers"/>
</dbReference>
<dbReference type="DNASU" id="208606"/>
<dbReference type="Ensembl" id="ENSMUST00000050827.14">
    <property type="protein sequence ID" value="ENSMUSP00000050563.8"/>
    <property type="gene ID" value="ENSMUSG00000029422.16"/>
</dbReference>
<dbReference type="Ensembl" id="ENSMUST00000057795.12">
    <property type="protein sequence ID" value="ENSMUSP00000049942.6"/>
    <property type="gene ID" value="ENSMUSG00000029422.16"/>
</dbReference>
<dbReference type="GeneID" id="208606"/>
<dbReference type="KEGG" id="mmu:208606"/>
<dbReference type="UCSC" id="uc008zoi.2">
    <property type="organism name" value="mouse"/>
</dbReference>
<dbReference type="AGR" id="MGI:1913489"/>
<dbReference type="CTD" id="65117"/>
<dbReference type="MGI" id="MGI:1913489">
    <property type="gene designation" value="Rsrc2"/>
</dbReference>
<dbReference type="VEuPathDB" id="HostDB:ENSMUSG00000029422"/>
<dbReference type="eggNOG" id="ENOG502QQ3C">
    <property type="taxonomic scope" value="Eukaryota"/>
</dbReference>
<dbReference type="GeneTree" id="ENSGT00730000111142"/>
<dbReference type="HOGENOM" id="CLU_051694_0_0_1"/>
<dbReference type="InParanoid" id="A2RTL5"/>
<dbReference type="OrthoDB" id="1928974at2759"/>
<dbReference type="PhylomeDB" id="A2RTL5"/>
<dbReference type="BioGRID-ORCS" id="208606">
    <property type="hits" value="5 hits in 28 CRISPR screens"/>
</dbReference>
<dbReference type="ChiTaRS" id="Rsrc2">
    <property type="organism name" value="mouse"/>
</dbReference>
<dbReference type="PRO" id="PR:A2RTL5"/>
<dbReference type="Proteomes" id="UP000000589">
    <property type="component" value="Chromosome 5"/>
</dbReference>
<dbReference type="RNAct" id="A2RTL5">
    <property type="molecule type" value="protein"/>
</dbReference>
<dbReference type="Bgee" id="ENSMUSG00000029422">
    <property type="expression patterns" value="Expressed in undifferentiated genital tubercle and 258 other cell types or tissues"/>
</dbReference>
<dbReference type="ExpressionAtlas" id="A2RTL5">
    <property type="expression patterns" value="baseline and differential"/>
</dbReference>
<dbReference type="InterPro" id="IPR028124">
    <property type="entry name" value="SMAP_dom"/>
</dbReference>
<dbReference type="PANTHER" id="PTHR22426">
    <property type="entry name" value="ARGININE_SERINE-RICH COILED-COIL PROTEIN 2"/>
    <property type="match status" value="1"/>
</dbReference>
<dbReference type="PANTHER" id="PTHR22426:SF2">
    <property type="entry name" value="ARGININE_SERINE-RICH COILED-COIL PROTEIN 2"/>
    <property type="match status" value="1"/>
</dbReference>
<dbReference type="Pfam" id="PF15477">
    <property type="entry name" value="SMAP"/>
    <property type="match status" value="1"/>
</dbReference>
<organism>
    <name type="scientific">Mus musculus</name>
    <name type="common">Mouse</name>
    <dbReference type="NCBI Taxonomy" id="10090"/>
    <lineage>
        <taxon>Eukaryota</taxon>
        <taxon>Metazoa</taxon>
        <taxon>Chordata</taxon>
        <taxon>Craniata</taxon>
        <taxon>Vertebrata</taxon>
        <taxon>Euteleostomi</taxon>
        <taxon>Mammalia</taxon>
        <taxon>Eutheria</taxon>
        <taxon>Euarchontoglires</taxon>
        <taxon>Glires</taxon>
        <taxon>Rodentia</taxon>
        <taxon>Myomorpha</taxon>
        <taxon>Muroidea</taxon>
        <taxon>Muridae</taxon>
        <taxon>Murinae</taxon>
        <taxon>Mus</taxon>
        <taxon>Mus</taxon>
    </lineage>
</organism>
<accession>A2RTL5</accession>
<name>RSRC2_MOUSE</name>
<reference key="1">
    <citation type="journal article" date="2004" name="Genome Res.">
        <title>The status, quality, and expansion of the NIH full-length cDNA project: the Mammalian Gene Collection (MGC).</title>
        <authorList>
            <consortium name="The MGC Project Team"/>
        </authorList>
    </citation>
    <scope>NUCLEOTIDE SEQUENCE [LARGE SCALE MRNA]</scope>
    <source>
        <tissue>Embryo</tissue>
    </source>
</reference>
<gene>
    <name type="primary">Rsrc2</name>
</gene>
<sequence length="376" mass="43876">MIRTNFLLKQGRRHESKDKSSKRHKSEEHNDKEHSSDKGRERLNSSENGEDRHKRKERKSSRGRSHSRSRSRERRHRSRSRERKKSRSRSRDRKKSRSRSRDRKKSRSRSRDRKRRIRTRSRSRSRHRHRTRSRSRSRSRSRDRKKRIEKPRRFSRSLSRTPSPPPFRGRNTAMDAQEALARRLERAKKLQEQREKEMVEKQKQQEMAAAAAATGGSVLNVAALLASGTQVTPQIAMAAQMAALQAKALAETGIAVPSYYNPAAVNPMKFAEQEKKRKMLWQGKKEGDKSQSAEIWEKLNFGNKDQNVKFRKLMGIKSEDEAGCSSVDEESYKTLKQQEEVFRNLDAQYEMARSQTHTQRGMGLGFTSSMRGMDTV</sequence>
<proteinExistence type="evidence at transcript level"/>